<protein>
    <recommendedName>
        <fullName>Pancreatic progenitor cell differentiation and proliferation factor</fullName>
    </recommendedName>
    <alternativeName>
        <fullName>Exocrine differentiation and proliferation factor</fullName>
    </alternativeName>
</protein>
<sequence>MAAIPSSGSLVATHDYYRRRLGSTSSNSSCSSTECPGEAIPHPPGLPKADPGHWWASFFFGKSTLPFMATVLESAEHSEPPQASSSMTACGLARDAPRKQPGGQSSTASAGPPS</sequence>
<evidence type="ECO:0000250" key="1"/>
<evidence type="ECO:0000256" key="2">
    <source>
        <dbReference type="SAM" id="MobiDB-lite"/>
    </source>
</evidence>
<evidence type="ECO:0000305" key="3"/>
<evidence type="ECO:0007744" key="4">
    <source>
    </source>
</evidence>
<keyword id="KW-0025">Alternative splicing</keyword>
<keyword id="KW-0217">Developmental protein</keyword>
<keyword id="KW-0221">Differentiation</keyword>
<keyword id="KW-0597">Phosphoprotein</keyword>
<keyword id="KW-1267">Proteomics identification</keyword>
<keyword id="KW-1185">Reference proteome</keyword>
<proteinExistence type="evidence at protein level"/>
<reference key="1">
    <citation type="journal article" date="2001" name="Nature">
        <title>The DNA sequence and comparative analysis of human chromosome 20.</title>
        <authorList>
            <person name="Deloukas P."/>
            <person name="Matthews L.H."/>
            <person name="Ashurst J.L."/>
            <person name="Burton J."/>
            <person name="Gilbert J.G.R."/>
            <person name="Jones M."/>
            <person name="Stavrides G."/>
            <person name="Almeida J.P."/>
            <person name="Babbage A.K."/>
            <person name="Bagguley C.L."/>
            <person name="Bailey J."/>
            <person name="Barlow K.F."/>
            <person name="Bates K.N."/>
            <person name="Beard L.M."/>
            <person name="Beare D.M."/>
            <person name="Beasley O.P."/>
            <person name="Bird C.P."/>
            <person name="Blakey S.E."/>
            <person name="Bridgeman A.M."/>
            <person name="Brown A.J."/>
            <person name="Buck D."/>
            <person name="Burrill W.D."/>
            <person name="Butler A.P."/>
            <person name="Carder C."/>
            <person name="Carter N.P."/>
            <person name="Chapman J.C."/>
            <person name="Clamp M."/>
            <person name="Clark G."/>
            <person name="Clark L.N."/>
            <person name="Clark S.Y."/>
            <person name="Clee C.M."/>
            <person name="Clegg S."/>
            <person name="Cobley V.E."/>
            <person name="Collier R.E."/>
            <person name="Connor R.E."/>
            <person name="Corby N.R."/>
            <person name="Coulson A."/>
            <person name="Coville G.J."/>
            <person name="Deadman R."/>
            <person name="Dhami P.D."/>
            <person name="Dunn M."/>
            <person name="Ellington A.G."/>
            <person name="Frankland J.A."/>
            <person name="Fraser A."/>
            <person name="French L."/>
            <person name="Garner P."/>
            <person name="Grafham D.V."/>
            <person name="Griffiths C."/>
            <person name="Griffiths M.N.D."/>
            <person name="Gwilliam R."/>
            <person name="Hall R.E."/>
            <person name="Hammond S."/>
            <person name="Harley J.L."/>
            <person name="Heath P.D."/>
            <person name="Ho S."/>
            <person name="Holden J.L."/>
            <person name="Howden P.J."/>
            <person name="Huckle E."/>
            <person name="Hunt A.R."/>
            <person name="Hunt S.E."/>
            <person name="Jekosch K."/>
            <person name="Johnson C.M."/>
            <person name="Johnson D."/>
            <person name="Kay M.P."/>
            <person name="Kimberley A.M."/>
            <person name="King A."/>
            <person name="Knights A."/>
            <person name="Laird G.K."/>
            <person name="Lawlor S."/>
            <person name="Lehvaeslaiho M.H."/>
            <person name="Leversha M.A."/>
            <person name="Lloyd C."/>
            <person name="Lloyd D.M."/>
            <person name="Lovell J.D."/>
            <person name="Marsh V.L."/>
            <person name="Martin S.L."/>
            <person name="McConnachie L.J."/>
            <person name="McLay K."/>
            <person name="McMurray A.A."/>
            <person name="Milne S.A."/>
            <person name="Mistry D."/>
            <person name="Moore M.J.F."/>
            <person name="Mullikin J.C."/>
            <person name="Nickerson T."/>
            <person name="Oliver K."/>
            <person name="Parker A."/>
            <person name="Patel R."/>
            <person name="Pearce T.A.V."/>
            <person name="Peck A.I."/>
            <person name="Phillimore B.J.C.T."/>
            <person name="Prathalingam S.R."/>
            <person name="Plumb R.W."/>
            <person name="Ramsay H."/>
            <person name="Rice C.M."/>
            <person name="Ross M.T."/>
            <person name="Scott C.E."/>
            <person name="Sehra H.K."/>
            <person name="Shownkeen R."/>
            <person name="Sims S."/>
            <person name="Skuce C.D."/>
            <person name="Smith M.L."/>
            <person name="Soderlund C."/>
            <person name="Steward C.A."/>
            <person name="Sulston J.E."/>
            <person name="Swann R.M."/>
            <person name="Sycamore N."/>
            <person name="Taylor R."/>
            <person name="Tee L."/>
            <person name="Thomas D.W."/>
            <person name="Thorpe A."/>
            <person name="Tracey A."/>
            <person name="Tromans A.C."/>
            <person name="Vaudin M."/>
            <person name="Wall M."/>
            <person name="Wallis J.M."/>
            <person name="Whitehead S.L."/>
            <person name="Whittaker P."/>
            <person name="Willey D.L."/>
            <person name="Williams L."/>
            <person name="Williams S.A."/>
            <person name="Wilming L."/>
            <person name="Wray P.W."/>
            <person name="Hubbard T."/>
            <person name="Durbin R.M."/>
            <person name="Bentley D.R."/>
            <person name="Beck S."/>
            <person name="Rogers J."/>
        </authorList>
    </citation>
    <scope>NUCLEOTIDE SEQUENCE [LARGE SCALE GENOMIC DNA]</scope>
    <scope>ALTERNATIVE SPLICING (ISOFORM 2)</scope>
</reference>
<reference key="2">
    <citation type="submission" date="2005-09" db="EMBL/GenBank/DDBJ databases">
        <authorList>
            <person name="Mural R.J."/>
            <person name="Istrail S."/>
            <person name="Sutton G.G."/>
            <person name="Florea L."/>
            <person name="Halpern A.L."/>
            <person name="Mobarry C.M."/>
            <person name="Lippert R."/>
            <person name="Walenz B."/>
            <person name="Shatkay H."/>
            <person name="Dew I."/>
            <person name="Miller J.R."/>
            <person name="Flanigan M.J."/>
            <person name="Edwards N.J."/>
            <person name="Bolanos R."/>
            <person name="Fasulo D."/>
            <person name="Halldorsson B.V."/>
            <person name="Hannenhalli S."/>
            <person name="Turner R."/>
            <person name="Yooseph S."/>
            <person name="Lu F."/>
            <person name="Nusskern D.R."/>
            <person name="Shue B.C."/>
            <person name="Zheng X.H."/>
            <person name="Zhong F."/>
            <person name="Delcher A.L."/>
            <person name="Huson D.H."/>
            <person name="Kravitz S.A."/>
            <person name="Mouchard L."/>
            <person name="Reinert K."/>
            <person name="Remington K.A."/>
            <person name="Clark A.G."/>
            <person name="Waterman M.S."/>
            <person name="Eichler E.E."/>
            <person name="Adams M.D."/>
            <person name="Hunkapiller M.W."/>
            <person name="Myers E.W."/>
            <person name="Venter J.C."/>
        </authorList>
    </citation>
    <scope>NUCLEOTIDE SEQUENCE [LARGE SCALE GENOMIC DNA]</scope>
</reference>
<reference key="3">
    <citation type="journal article" date="2004" name="Genome Res.">
        <title>The status, quality, and expansion of the NIH full-length cDNA project: the Mammalian Gene Collection (MGC).</title>
        <authorList>
            <consortium name="The MGC Project Team"/>
        </authorList>
    </citation>
    <scope>NUCLEOTIDE SEQUENCE [LARGE SCALE MRNA] (ISOFORM 1)</scope>
    <source>
        <tissue>Eye</tissue>
        <tissue>Placenta</tissue>
    </source>
</reference>
<reference key="4">
    <citation type="journal article" date="2013" name="J. Proteome Res.">
        <title>Toward a comprehensive characterization of a human cancer cell phosphoproteome.</title>
        <authorList>
            <person name="Zhou H."/>
            <person name="Di Palma S."/>
            <person name="Preisinger C."/>
            <person name="Peng M."/>
            <person name="Polat A.N."/>
            <person name="Heck A.J."/>
            <person name="Mohammed S."/>
        </authorList>
    </citation>
    <scope>PHOSPHORYLATION [LARGE SCALE ANALYSIS] AT SER-9</scope>
    <scope>IDENTIFICATION BY MASS SPECTROMETRY [LARGE SCALE ANALYSIS]</scope>
    <source>
        <tissue>Cervix carcinoma</tissue>
        <tissue>Erythroleukemia</tissue>
    </source>
</reference>
<organism>
    <name type="scientific">Homo sapiens</name>
    <name type="common">Human</name>
    <dbReference type="NCBI Taxonomy" id="9606"/>
    <lineage>
        <taxon>Eukaryota</taxon>
        <taxon>Metazoa</taxon>
        <taxon>Chordata</taxon>
        <taxon>Craniata</taxon>
        <taxon>Vertebrata</taxon>
        <taxon>Euteleostomi</taxon>
        <taxon>Mammalia</taxon>
        <taxon>Eutheria</taxon>
        <taxon>Euarchontoglires</taxon>
        <taxon>Primates</taxon>
        <taxon>Haplorrhini</taxon>
        <taxon>Catarrhini</taxon>
        <taxon>Hominidae</taxon>
        <taxon>Homo</taxon>
    </lineage>
</organism>
<name>PPDPF_HUMAN</name>
<dbReference type="EMBL" id="AL121829">
    <property type="status" value="NOT_ANNOTATED_CDS"/>
    <property type="molecule type" value="Genomic_DNA"/>
</dbReference>
<dbReference type="EMBL" id="CH471077">
    <property type="protein sequence ID" value="EAW75264.1"/>
    <property type="molecule type" value="Genomic_DNA"/>
</dbReference>
<dbReference type="EMBL" id="CH471077">
    <property type="protein sequence ID" value="EAW75265.1"/>
    <property type="molecule type" value="Genomic_DNA"/>
</dbReference>
<dbReference type="EMBL" id="BC002531">
    <property type="protein sequence ID" value="AAH02531.1"/>
    <property type="molecule type" value="mRNA"/>
</dbReference>
<dbReference type="EMBL" id="BC056416">
    <property type="protein sequence ID" value="AAH56416.1"/>
    <property type="molecule type" value="mRNA"/>
</dbReference>
<dbReference type="CCDS" id="CCDS13523.1">
    <molecule id="Q9H3Y8-1"/>
</dbReference>
<dbReference type="RefSeq" id="NP_077275.1">
    <molecule id="Q9H3Y8-1"/>
    <property type="nucleotide sequence ID" value="NM_024299.4"/>
</dbReference>
<dbReference type="BioGRID" id="122563">
    <property type="interactions" value="12"/>
</dbReference>
<dbReference type="FunCoup" id="Q9H3Y8">
    <property type="interactions" value="48"/>
</dbReference>
<dbReference type="STRING" id="9606.ENSP00000359198"/>
<dbReference type="GlyGen" id="Q9H3Y8">
    <property type="glycosylation" value="2 sites, 1 N-linked glycan (1 site), 1 O-linked glycan (1 site)"/>
</dbReference>
<dbReference type="iPTMnet" id="Q9H3Y8"/>
<dbReference type="PhosphoSitePlus" id="Q9H3Y8"/>
<dbReference type="BioMuta" id="PPDPF"/>
<dbReference type="DMDM" id="27734256"/>
<dbReference type="jPOST" id="Q9H3Y8"/>
<dbReference type="MassIVE" id="Q9H3Y8"/>
<dbReference type="PaxDb" id="9606-ENSP00000359198"/>
<dbReference type="PeptideAtlas" id="Q9H3Y8"/>
<dbReference type="ProteomicsDB" id="80769">
    <molecule id="Q9H3Y8-1"/>
</dbReference>
<dbReference type="ProteomicsDB" id="80770">
    <molecule id="Q9H3Y8-2"/>
</dbReference>
<dbReference type="Pumba" id="Q9H3Y8"/>
<dbReference type="Antibodypedia" id="44524">
    <property type="antibodies" value="20 antibodies from 12 providers"/>
</dbReference>
<dbReference type="DNASU" id="79144"/>
<dbReference type="Ensembl" id="ENST00000370179.8">
    <molecule id="Q9H3Y8-1"/>
    <property type="protein sequence ID" value="ENSP00000359198.3"/>
    <property type="gene ID" value="ENSG00000125534.11"/>
</dbReference>
<dbReference type="GeneID" id="79144"/>
<dbReference type="KEGG" id="hsa:79144"/>
<dbReference type="MANE-Select" id="ENST00000370179.8">
    <property type="protein sequence ID" value="ENSP00000359198.3"/>
    <property type="RefSeq nucleotide sequence ID" value="NM_024299.4"/>
    <property type="RefSeq protein sequence ID" value="NP_077275.1"/>
</dbReference>
<dbReference type="UCSC" id="uc002yff.4">
    <molecule id="Q9H3Y8-1"/>
    <property type="organism name" value="human"/>
</dbReference>
<dbReference type="AGR" id="HGNC:16142"/>
<dbReference type="CTD" id="79144"/>
<dbReference type="DisGeNET" id="79144"/>
<dbReference type="GeneCards" id="PPDPF"/>
<dbReference type="HGNC" id="HGNC:16142">
    <property type="gene designation" value="PPDPF"/>
</dbReference>
<dbReference type="HPA" id="ENSG00000125534">
    <property type="expression patterns" value="Low tissue specificity"/>
</dbReference>
<dbReference type="neXtProt" id="NX_Q9H3Y8"/>
<dbReference type="OpenTargets" id="ENSG00000125534"/>
<dbReference type="PharmGKB" id="PA25691"/>
<dbReference type="VEuPathDB" id="HostDB:ENSG00000125534"/>
<dbReference type="eggNOG" id="ENOG502S1KD">
    <property type="taxonomic scope" value="Eukaryota"/>
</dbReference>
<dbReference type="GeneTree" id="ENSGT00390000009113"/>
<dbReference type="HOGENOM" id="CLU_157362_0_0_1"/>
<dbReference type="InParanoid" id="Q9H3Y8"/>
<dbReference type="OrthoDB" id="9411431at2759"/>
<dbReference type="PAN-GO" id="Q9H3Y8">
    <property type="GO annotations" value="0 GO annotations based on evolutionary models"/>
</dbReference>
<dbReference type="PhylomeDB" id="Q9H3Y8"/>
<dbReference type="TreeFam" id="TF333000"/>
<dbReference type="PathwayCommons" id="Q9H3Y8"/>
<dbReference type="BioGRID-ORCS" id="79144">
    <property type="hits" value="22 hits in 1154 CRISPR screens"/>
</dbReference>
<dbReference type="ChiTaRS" id="PPDPF">
    <property type="organism name" value="human"/>
</dbReference>
<dbReference type="GenomeRNAi" id="79144"/>
<dbReference type="Pharos" id="Q9H3Y8">
    <property type="development level" value="Tdark"/>
</dbReference>
<dbReference type="PRO" id="PR:Q9H3Y8"/>
<dbReference type="Proteomes" id="UP000005640">
    <property type="component" value="Chromosome 20"/>
</dbReference>
<dbReference type="RNAct" id="Q9H3Y8">
    <property type="molecule type" value="protein"/>
</dbReference>
<dbReference type="Bgee" id="ENSG00000125534">
    <property type="expression patterns" value="Expressed in lower esophagus mucosa and 180 other cell types or tissues"/>
</dbReference>
<dbReference type="ExpressionAtlas" id="Q9H3Y8">
    <property type="expression patterns" value="baseline and differential"/>
</dbReference>
<dbReference type="GO" id="GO:0005739">
    <property type="term" value="C:mitochondrion"/>
    <property type="evidence" value="ECO:0006056"/>
    <property type="project" value="FlyBase"/>
</dbReference>
<dbReference type="GO" id="GO:0030154">
    <property type="term" value="P:cell differentiation"/>
    <property type="evidence" value="ECO:0007669"/>
    <property type="project" value="UniProtKB-KW"/>
</dbReference>
<dbReference type="GO" id="GO:0001889">
    <property type="term" value="P:liver development"/>
    <property type="evidence" value="ECO:0007669"/>
    <property type="project" value="Ensembl"/>
</dbReference>
<dbReference type="GO" id="GO:0038202">
    <property type="term" value="P:TORC1 signaling"/>
    <property type="evidence" value="ECO:0007669"/>
    <property type="project" value="Ensembl"/>
</dbReference>
<dbReference type="InterPro" id="IPR026754">
    <property type="entry name" value="PPDPF"/>
</dbReference>
<dbReference type="PANTHER" id="PTHR14572">
    <property type="entry name" value="PANCREATIC PROGENITOR CELL DIFFERENTIATION AND PROLIFERATION FACTOR"/>
    <property type="match status" value="1"/>
</dbReference>
<dbReference type="Pfam" id="PF15060">
    <property type="entry name" value="PPDFL"/>
    <property type="match status" value="1"/>
</dbReference>
<dbReference type="PRINTS" id="PR02071">
    <property type="entry name" value="PPDPFACTOR"/>
</dbReference>
<comment type="function">
    <text evidence="1">Probable regulator of exocrine pancreas development.</text>
</comment>
<comment type="alternative products">
    <event type="alternative splicing"/>
    <isoform>
        <id>Q9H3Y8-1</id>
        <name>1</name>
        <sequence type="displayed"/>
    </isoform>
    <isoform>
        <id>Q9H3Y8-2</id>
        <name>2</name>
        <sequence type="described" ref="VSP_003823 VSP_003824"/>
    </isoform>
</comment>
<comment type="similarity">
    <text evidence="3">Belongs to the PPDPF family.</text>
</comment>
<accession>Q9H3Y8</accession>
<accession>E1P5J2</accession>
<accession>Q4VXP1</accession>
<accession>Q9H3Y7</accession>
<gene>
    <name type="primary">PPDPF</name>
    <name type="synonym">C20orf149</name>
    <name type="synonym">EXPDF</name>
</gene>
<feature type="chain" id="PRO_0000079468" description="Pancreatic progenitor cell differentiation and proliferation factor">
    <location>
        <begin position="1"/>
        <end position="114"/>
    </location>
</feature>
<feature type="region of interest" description="Disordered" evidence="2">
    <location>
        <begin position="22"/>
        <end position="47"/>
    </location>
</feature>
<feature type="region of interest" description="Disordered" evidence="2">
    <location>
        <begin position="75"/>
        <end position="114"/>
    </location>
</feature>
<feature type="compositionally biased region" description="Low complexity" evidence="2">
    <location>
        <begin position="23"/>
        <end position="33"/>
    </location>
</feature>
<feature type="compositionally biased region" description="Polar residues" evidence="2">
    <location>
        <begin position="102"/>
        <end position="114"/>
    </location>
</feature>
<feature type="modified residue" description="Phosphoserine" evidence="4">
    <location>
        <position position="9"/>
    </location>
</feature>
<feature type="splice variant" id="VSP_003823" description="In isoform 2." evidence="3">
    <original>FMAT</original>
    <variation>PPTL</variation>
    <location>
        <begin position="67"/>
        <end position="70"/>
    </location>
</feature>
<feature type="splice variant" id="VSP_003824" description="In isoform 2." evidence="3">
    <location>
        <begin position="71"/>
        <end position="114"/>
    </location>
</feature>